<keyword id="KW-0002">3D-structure</keyword>
<keyword id="KW-0444">Lipid biosynthesis</keyword>
<keyword id="KW-0443">Lipid metabolism</keyword>
<keyword id="KW-0489">Methyltransferase</keyword>
<keyword id="KW-0594">Phospholipid biosynthesis</keyword>
<keyword id="KW-1208">Phospholipid metabolism</keyword>
<keyword id="KW-1185">Reference proteome</keyword>
<keyword id="KW-0949">S-adenosyl-L-methionine</keyword>
<keyword id="KW-0808">Transferase</keyword>
<organism>
    <name type="scientific">Caenorhabditis elegans</name>
    <dbReference type="NCBI Taxonomy" id="6239"/>
    <lineage>
        <taxon>Eukaryota</taxon>
        <taxon>Metazoa</taxon>
        <taxon>Ecdysozoa</taxon>
        <taxon>Nematoda</taxon>
        <taxon>Chromadorea</taxon>
        <taxon>Rhabditida</taxon>
        <taxon>Rhabditina</taxon>
        <taxon>Rhabditomorpha</taxon>
        <taxon>Rhabditoidea</taxon>
        <taxon>Rhabditidae</taxon>
        <taxon>Peloderinae</taxon>
        <taxon>Caenorhabditis</taxon>
    </lineage>
</organism>
<accession>Q22993</accession>
<comment type="function">
    <text evidence="1">Catalyzes the last two methylation reactions in the synthesis of phosphocholine, by converting phospho-monomethylethanolamine (N-methylethanolamine phosphate) into phospho-dimethylethanolamine (N,N-dimethylethanolamine phosphate) and the latter into phosphocholine. Phosphocholine is a precursor for phosphatidylcholine, a major component in membranes and a precursor itself in the production of glycoconjugates secreted by parasitic nematodes to avoid host immune responses.</text>
</comment>
<comment type="catalytic activity">
    <reaction evidence="1">
        <text>N-methylethanolamine phosphate + S-adenosyl-L-methionine = N,N-dimethylethanolamine phosphate + S-adenosyl-L-homocysteine + H(+)</text>
        <dbReference type="Rhea" id="RHEA:25321"/>
        <dbReference type="ChEBI" id="CHEBI:15378"/>
        <dbReference type="ChEBI" id="CHEBI:57781"/>
        <dbReference type="ChEBI" id="CHEBI:57856"/>
        <dbReference type="ChEBI" id="CHEBI:58641"/>
        <dbReference type="ChEBI" id="CHEBI:59789"/>
        <dbReference type="EC" id="2.1.1.103"/>
    </reaction>
    <physiologicalReaction direction="left-to-right" evidence="1">
        <dbReference type="Rhea" id="RHEA:25322"/>
    </physiologicalReaction>
</comment>
<comment type="catalytic activity">
    <reaction evidence="1">
        <text>N,N-dimethylethanolamine phosphate + S-adenosyl-L-methionine = phosphocholine + S-adenosyl-L-homocysteine + H(+)</text>
        <dbReference type="Rhea" id="RHEA:25325"/>
        <dbReference type="ChEBI" id="CHEBI:15378"/>
        <dbReference type="ChEBI" id="CHEBI:57856"/>
        <dbReference type="ChEBI" id="CHEBI:58641"/>
        <dbReference type="ChEBI" id="CHEBI:59789"/>
        <dbReference type="ChEBI" id="CHEBI:295975"/>
        <dbReference type="EC" id="2.1.1.103"/>
    </reaction>
    <physiologicalReaction direction="left-to-right" evidence="1">
        <dbReference type="Rhea" id="RHEA:25326"/>
    </physiologicalReaction>
</comment>
<comment type="activity regulation">
    <text evidence="1">Feedback inhibition by phosphatidylcholine and also by S-adenosylhomocysteine.</text>
</comment>
<comment type="biophysicochemical properties">
    <kinetics>
        <KM evidence="1">0.27 mM for S-adenosyl-L-methionine</KM>
        <KM evidence="1">3.34 mM for N-methylethanolamine phosphate</KM>
        <KM evidence="1">1.19 mM for N,N-dimethylethanolamine phosphate</KM>
        <Vmax evidence="1">555.0 nmol/min/mg enzyme with N,N-dimethylethanolamine phosphate as substrate</Vmax>
    </kinetics>
</comment>
<comment type="pathway">
    <text evidence="1">Phospholipid metabolism; phosphatidylcholine biosynthesis; phosphocholine from phosphoethanolamine.</text>
</comment>
<comment type="disruption phenotype">
    <text evidence="1">Essential in multiple developmental steps, its disruption causes developmentally impaired worms.</text>
</comment>
<comment type="similarity">
    <text evidence="4">Belongs to the class I-like SAM-binding methyltransferase superfamily.</text>
</comment>
<dbReference type="EC" id="2.1.1.103" evidence="1"/>
<dbReference type="EMBL" id="BX284605">
    <property type="protein sequence ID" value="CCD71034.1"/>
    <property type="molecule type" value="Genomic_DNA"/>
</dbReference>
<dbReference type="PIR" id="T29330">
    <property type="entry name" value="T29330"/>
</dbReference>
<dbReference type="RefSeq" id="NP_504248.1">
    <property type="nucleotide sequence ID" value="NM_071847.7"/>
</dbReference>
<dbReference type="PDB" id="4INE">
    <property type="method" value="X-ray"/>
    <property type="resolution" value="1.45 A"/>
    <property type="chains" value="A/B=1-437"/>
</dbReference>
<dbReference type="PDBsum" id="4INE"/>
<dbReference type="SMR" id="Q22993"/>
<dbReference type="FunCoup" id="Q22993">
    <property type="interactions" value="62"/>
</dbReference>
<dbReference type="STRING" id="6239.F54D11.1.1"/>
<dbReference type="BindingDB" id="Q22993"/>
<dbReference type="SwissLipids" id="SLP:000000514"/>
<dbReference type="PaxDb" id="6239-F54D11.1.1"/>
<dbReference type="PeptideAtlas" id="Q22993"/>
<dbReference type="EnsemblMetazoa" id="F54D11.1.1">
    <property type="protein sequence ID" value="F54D11.1.1"/>
    <property type="gene ID" value="WBGene00018811"/>
</dbReference>
<dbReference type="GeneID" id="178854"/>
<dbReference type="KEGG" id="cel:CELE_F54D11.1"/>
<dbReference type="UCSC" id="F54D11.1.1">
    <property type="organism name" value="c. elegans"/>
</dbReference>
<dbReference type="AGR" id="WB:WBGene00018811"/>
<dbReference type="CTD" id="178854"/>
<dbReference type="WormBase" id="F54D11.1">
    <property type="protein sequence ID" value="CE11068"/>
    <property type="gene ID" value="WBGene00018811"/>
    <property type="gene designation" value="pmt-2"/>
</dbReference>
<dbReference type="eggNOG" id="KOG1269">
    <property type="taxonomic scope" value="Eukaryota"/>
</dbReference>
<dbReference type="HOGENOM" id="CLU_029163_0_0_1"/>
<dbReference type="InParanoid" id="Q22993"/>
<dbReference type="OMA" id="ITMYGKG"/>
<dbReference type="OrthoDB" id="8300214at2759"/>
<dbReference type="PhylomeDB" id="Q22993"/>
<dbReference type="SABIO-RK" id="Q22993"/>
<dbReference type="EvolutionaryTrace" id="Q22993"/>
<dbReference type="PRO" id="PR:Q22993"/>
<dbReference type="Proteomes" id="UP000001940">
    <property type="component" value="Chromosome V"/>
</dbReference>
<dbReference type="Bgee" id="WBGene00018811">
    <property type="expression patterns" value="Expressed in larva and 4 other cell types or tissues"/>
</dbReference>
<dbReference type="GO" id="GO:0008170">
    <property type="term" value="F:N-methyltransferase activity"/>
    <property type="evidence" value="ECO:0000318"/>
    <property type="project" value="GO_Central"/>
</dbReference>
<dbReference type="GO" id="GO:0000773">
    <property type="term" value="F:phosphatidyl-N-methylethanolamine N-methyltransferase activity"/>
    <property type="evidence" value="ECO:0000314"/>
    <property type="project" value="WormBase"/>
</dbReference>
<dbReference type="GO" id="GO:0000234">
    <property type="term" value="F:phosphoethanolamine N-methyltransferase activity"/>
    <property type="evidence" value="ECO:0007669"/>
    <property type="project" value="UniProtKB-EC"/>
</dbReference>
<dbReference type="GO" id="GO:0032259">
    <property type="term" value="P:methylation"/>
    <property type="evidence" value="ECO:0007669"/>
    <property type="project" value="UniProtKB-KW"/>
</dbReference>
<dbReference type="GO" id="GO:0006656">
    <property type="term" value="P:phosphatidylcholine biosynthetic process"/>
    <property type="evidence" value="ECO:0000314"/>
    <property type="project" value="WormBase"/>
</dbReference>
<dbReference type="CDD" id="cd02440">
    <property type="entry name" value="AdoMet_MTases"/>
    <property type="match status" value="1"/>
</dbReference>
<dbReference type="FunFam" id="3.40.50.150:FF:000546">
    <property type="entry name" value="Phosphoethanolamine MethylTransferase"/>
    <property type="match status" value="1"/>
</dbReference>
<dbReference type="Gene3D" id="3.40.50.150">
    <property type="entry name" value="Vaccinia Virus protein VP39"/>
    <property type="match status" value="1"/>
</dbReference>
<dbReference type="InterPro" id="IPR013216">
    <property type="entry name" value="Methyltransf_11"/>
</dbReference>
<dbReference type="InterPro" id="IPR040516">
    <property type="entry name" value="PMT2_N"/>
</dbReference>
<dbReference type="InterPro" id="IPR029063">
    <property type="entry name" value="SAM-dependent_MTases_sf"/>
</dbReference>
<dbReference type="PANTHER" id="PTHR44307">
    <property type="entry name" value="PHOSPHOETHANOLAMINE METHYLTRANSFERASE"/>
    <property type="match status" value="1"/>
</dbReference>
<dbReference type="PANTHER" id="PTHR44307:SF2">
    <property type="entry name" value="PHOSPHOETHANOLAMINE METHYLTRANSFERASE ISOFORM X1"/>
    <property type="match status" value="1"/>
</dbReference>
<dbReference type="Pfam" id="PF08241">
    <property type="entry name" value="Methyltransf_11"/>
    <property type="match status" value="1"/>
</dbReference>
<dbReference type="Pfam" id="PF17987">
    <property type="entry name" value="PMT2_N"/>
    <property type="match status" value="1"/>
</dbReference>
<dbReference type="SUPFAM" id="SSF53335">
    <property type="entry name" value="S-adenosyl-L-methionine-dependent methyltransferases"/>
    <property type="match status" value="1"/>
</dbReference>
<name>PMT2_CAEEL</name>
<protein>
    <recommendedName>
        <fullName evidence="5">Phosphoethanolamine N-methyltransferase 2</fullName>
        <shortName evidence="3">PMT-2</shortName>
        <ecNumber evidence="1">2.1.1.103</ecNumber>
    </recommendedName>
    <alternativeName>
        <fullName evidence="3">S-adenosyl-L-methionine:phosphomethylethanolamine N-methyltransferase</fullName>
    </alternativeName>
</protein>
<gene>
    <name evidence="7 8" type="primary">pmt-2</name>
    <name evidence="8" type="ORF">F54D11.1</name>
</gene>
<sequence length="437" mass="49769">MSSLSIPRQSLYYVNKVTEGRSVSNVQVVSPCQKQGQTYVTAFTPLTSNVQVHTSLEQLSTIRNADVLIFNNALSQIITNADLLTDFLKNATNATAIGGTVIIREDLKDCSDKRQVARLTDYFDVFRTTDSDGNNTGLDLYTVDQVEHSNYVEQNFLDFIFVFRKKVFAPTTDATITFRDFLDKTQYTNTGIDAYEWMFGVNFISPGGYDENLKIIKRFGDFKPGQTMLDIGVGIGGGARQVADEFGVHVHGIDLSSNMLAIALERLHEEKDSRVKYSITDALVYQFEDNSFDYVFSRDCIQHIPDTEKLFSRIYKALKPGGKVLITMYGKGYGEQSDKFKTYVAQRAYFLKNLKEIADIANKTGFVNVQTENMTPRFKEILLEERGHLEQNEAEFMSKFTQRERDSLISGWTDKLGYIEKDNHNWNFFLAQKPFPK</sequence>
<reference key="1">
    <citation type="journal article" date="1998" name="Science">
        <title>Genome sequence of the nematode C. elegans: a platform for investigating biology.</title>
        <authorList>
            <consortium name="The C. elegans sequencing consortium"/>
        </authorList>
    </citation>
    <scope>NUCLEOTIDE SEQUENCE [LARGE SCALE GENOMIC DNA]</scope>
    <source>
        <strain>Bristol N2</strain>
    </source>
</reference>
<reference key="2">
    <citation type="journal article" date="2006" name="Biochemistry">
        <title>Defining the role of phosphomethylethanolamine N-methyltransferase from Caenorhabditis elegans in phosphocholine biosynthesis by biochemical and kinetic analysis.</title>
        <authorList>
            <person name="Palavalli L.H."/>
            <person name="Brendza K.M."/>
            <person name="Haakenson W."/>
            <person name="Cahoon R.E."/>
            <person name="McLaird M."/>
            <person name="Hicks L.M."/>
            <person name="McCarter J.P."/>
            <person name="Williams D.J."/>
            <person name="Hresko M.C."/>
            <person name="Jez J.M."/>
        </authorList>
    </citation>
    <scope>FUNCTION</scope>
    <scope>CATALYTIC ACTIVITY</scope>
    <scope>BIOPHYSICOCHEMICAL PROPERTIES</scope>
    <scope>DISRUPTION PHENOTYPE</scope>
    <scope>PATHWAY</scope>
</reference>
<reference evidence="9" key="3">
    <citation type="submission" date="2013-01" db="PDB data bank">
        <title>Crystal structure of N-methyl transferase (PMT-2) from Caenorhabditis elegant complexed with S-adenosyl homocysteine and phosphoethanolamine.</title>
        <authorList>
            <person name="Lukk T."/>
            <person name="Nair S.K."/>
        </authorList>
    </citation>
    <scope>X-RAY CRYSTALLOGRAPHY (1.45 ANGSTROMS) IN COMPLEX WITH S-ADENOSYL-L-HOMOCYSTEINE AND PHOSPHOETHANOLAMINE</scope>
</reference>
<evidence type="ECO:0000269" key="1">
    <source>
    </source>
</evidence>
<evidence type="ECO:0000269" key="2">
    <source ref="3"/>
</evidence>
<evidence type="ECO:0000303" key="3">
    <source>
    </source>
</evidence>
<evidence type="ECO:0000305" key="4"/>
<evidence type="ECO:0000305" key="5">
    <source>
    </source>
</evidence>
<evidence type="ECO:0000305" key="6">
    <source ref="3"/>
</evidence>
<evidence type="ECO:0000312" key="7">
    <source>
        <dbReference type="EMBL" id="CCD71034.1"/>
    </source>
</evidence>
<evidence type="ECO:0000312" key="8">
    <source>
        <dbReference type="WormBase" id="F54D11.1"/>
    </source>
</evidence>
<evidence type="ECO:0007744" key="9">
    <source>
        <dbReference type="PDB" id="4INE"/>
    </source>
</evidence>
<evidence type="ECO:0007829" key="10">
    <source>
        <dbReference type="PDB" id="4INE"/>
    </source>
</evidence>
<proteinExistence type="evidence at protein level"/>
<feature type="chain" id="PRO_0000452992" description="Phosphoethanolamine N-methyltransferase 2">
    <location>
        <begin position="1"/>
        <end position="437"/>
    </location>
</feature>
<feature type="binding site" evidence="6 9">
    <location>
        <begin position="186"/>
        <end position="187"/>
    </location>
    <ligand>
        <name>N-methylethanolamine phosphate</name>
        <dbReference type="ChEBI" id="CHEBI:57781"/>
    </ligand>
</feature>
<feature type="binding site" evidence="6 9">
    <location>
        <position position="195"/>
    </location>
    <ligand>
        <name>N-methylethanolamine phosphate</name>
        <dbReference type="ChEBI" id="CHEBI:57781"/>
    </ligand>
</feature>
<feature type="binding site" evidence="2 9">
    <location>
        <begin position="204"/>
        <end position="205"/>
    </location>
    <ligand>
        <name>S-adenosyl-L-homocysteine</name>
        <dbReference type="ChEBI" id="CHEBI:57856"/>
    </ligand>
</feature>
<feature type="binding site" evidence="2 9">
    <location>
        <position position="232"/>
    </location>
    <ligand>
        <name>S-adenosyl-L-homocysteine</name>
        <dbReference type="ChEBI" id="CHEBI:57856"/>
    </ligand>
</feature>
<feature type="binding site" evidence="2 9">
    <location>
        <position position="254"/>
    </location>
    <ligand>
        <name>S-adenosyl-L-homocysteine</name>
        <dbReference type="ChEBI" id="CHEBI:57856"/>
    </ligand>
</feature>
<feature type="binding site" evidence="2 9">
    <location>
        <begin position="281"/>
        <end position="282"/>
    </location>
    <ligand>
        <name>S-adenosyl-L-homocysteine</name>
        <dbReference type="ChEBI" id="CHEBI:57856"/>
    </ligand>
</feature>
<feature type="binding site" evidence="2 9">
    <location>
        <position position="298"/>
    </location>
    <ligand>
        <name>S-adenosyl-L-homocysteine</name>
        <dbReference type="ChEBI" id="CHEBI:57856"/>
    </ligand>
</feature>
<feature type="binding site" evidence="6 9">
    <location>
        <position position="329"/>
    </location>
    <ligand>
        <name>N-methylethanolamine phosphate</name>
        <dbReference type="ChEBI" id="CHEBI:57781"/>
    </ligand>
</feature>
<feature type="binding site" evidence="6 9">
    <location>
        <position position="343"/>
    </location>
    <ligand>
        <name>N-methylethanolamine phosphate</name>
        <dbReference type="ChEBI" id="CHEBI:57781"/>
    </ligand>
</feature>
<feature type="binding site" evidence="6 9">
    <location>
        <begin position="347"/>
        <end position="349"/>
    </location>
    <ligand>
        <name>N-methylethanolamine phosphate</name>
        <dbReference type="ChEBI" id="CHEBI:57781"/>
    </ligand>
</feature>
<feature type="binding site" evidence="6 9">
    <location>
        <position position="415"/>
    </location>
    <ligand>
        <name>N-methylethanolamine phosphate</name>
        <dbReference type="ChEBI" id="CHEBI:57781"/>
    </ligand>
</feature>
<feature type="helix" evidence="10">
    <location>
        <begin position="5"/>
        <end position="17"/>
    </location>
</feature>
<feature type="strand" evidence="10">
    <location>
        <begin position="19"/>
        <end position="21"/>
    </location>
</feature>
<feature type="strand" evidence="10">
    <location>
        <begin position="26"/>
        <end position="29"/>
    </location>
</feature>
<feature type="helix" evidence="10">
    <location>
        <begin position="33"/>
        <end position="43"/>
    </location>
</feature>
<feature type="turn" evidence="10">
    <location>
        <begin position="44"/>
        <end position="46"/>
    </location>
</feature>
<feature type="strand" evidence="10">
    <location>
        <begin position="50"/>
        <end position="54"/>
    </location>
</feature>
<feature type="helix" evidence="10">
    <location>
        <begin position="56"/>
        <end position="58"/>
    </location>
</feature>
<feature type="turn" evidence="10">
    <location>
        <begin position="59"/>
        <end position="61"/>
    </location>
</feature>
<feature type="strand" evidence="10">
    <location>
        <begin position="65"/>
        <end position="72"/>
    </location>
</feature>
<feature type="turn" evidence="10">
    <location>
        <begin position="75"/>
        <end position="79"/>
    </location>
</feature>
<feature type="helix" evidence="10">
    <location>
        <begin position="81"/>
        <end position="92"/>
    </location>
</feature>
<feature type="strand" evidence="10">
    <location>
        <begin position="98"/>
        <end position="106"/>
    </location>
</feature>
<feature type="helix" evidence="10">
    <location>
        <begin position="115"/>
        <end position="125"/>
    </location>
</feature>
<feature type="strand" evidence="10">
    <location>
        <begin position="135"/>
        <end position="145"/>
    </location>
</feature>
<feature type="helix" evidence="10">
    <location>
        <begin position="147"/>
        <end position="151"/>
    </location>
</feature>
<feature type="strand" evidence="10">
    <location>
        <begin position="158"/>
        <end position="167"/>
    </location>
</feature>
<feature type="helix" evidence="10">
    <location>
        <begin position="178"/>
        <end position="184"/>
    </location>
</feature>
<feature type="turn" evidence="10">
    <location>
        <begin position="185"/>
        <end position="187"/>
    </location>
</feature>
<feature type="helix" evidence="10">
    <location>
        <begin position="189"/>
        <end position="199"/>
    </location>
</feature>
<feature type="helix" evidence="10">
    <location>
        <begin position="208"/>
        <end position="216"/>
    </location>
</feature>
<feature type="helix" evidence="10">
    <location>
        <begin position="217"/>
        <end position="219"/>
    </location>
</feature>
<feature type="strand" evidence="10">
    <location>
        <begin position="227"/>
        <end position="232"/>
    </location>
</feature>
<feature type="helix" evidence="10">
    <location>
        <begin position="237"/>
        <end position="246"/>
    </location>
</feature>
<feature type="strand" evidence="10">
    <location>
        <begin position="249"/>
        <end position="255"/>
    </location>
</feature>
<feature type="helix" evidence="10">
    <location>
        <begin position="257"/>
        <end position="269"/>
    </location>
</feature>
<feature type="strand" evidence="10">
    <location>
        <begin position="275"/>
        <end position="279"/>
    </location>
</feature>
<feature type="turn" evidence="10">
    <location>
        <begin position="282"/>
        <end position="284"/>
    </location>
</feature>
<feature type="strand" evidence="10">
    <location>
        <begin position="292"/>
        <end position="299"/>
    </location>
</feature>
<feature type="helix" evidence="10">
    <location>
        <begin position="301"/>
        <end position="303"/>
    </location>
</feature>
<feature type="helix" evidence="10">
    <location>
        <begin position="307"/>
        <end position="317"/>
    </location>
</feature>
<feature type="strand" evidence="10">
    <location>
        <begin position="318"/>
        <end position="331"/>
    </location>
</feature>
<feature type="helix" evidence="10">
    <location>
        <begin position="338"/>
        <end position="347"/>
    </location>
</feature>
<feature type="helix" evidence="10">
    <location>
        <begin position="354"/>
        <end position="364"/>
    </location>
</feature>
<feature type="strand" evidence="10">
    <location>
        <begin position="367"/>
        <end position="373"/>
    </location>
</feature>
<feature type="helix" evidence="10">
    <location>
        <begin position="375"/>
        <end position="391"/>
    </location>
</feature>
<feature type="helix" evidence="10">
    <location>
        <begin position="393"/>
        <end position="399"/>
    </location>
</feature>
<feature type="helix" evidence="10">
    <location>
        <begin position="402"/>
        <end position="420"/>
    </location>
</feature>
<feature type="strand" evidence="10">
    <location>
        <begin position="424"/>
        <end position="432"/>
    </location>
</feature>